<accession>Q8XIB9</accession>
<organism>
    <name type="scientific">Clostridium perfringens (strain 13 / Type A)</name>
    <dbReference type="NCBI Taxonomy" id="195102"/>
    <lineage>
        <taxon>Bacteria</taxon>
        <taxon>Bacillati</taxon>
        <taxon>Bacillota</taxon>
        <taxon>Clostridia</taxon>
        <taxon>Eubacteriales</taxon>
        <taxon>Clostridiaceae</taxon>
        <taxon>Clostridium</taxon>
    </lineage>
</organism>
<comment type="function">
    <text evidence="1">Peptide chain release factor 1 directs the termination of translation in response to the peptide chain termination codons UAG and UAA.</text>
</comment>
<comment type="subcellular location">
    <subcellularLocation>
        <location evidence="1">Cytoplasm</location>
    </subcellularLocation>
</comment>
<comment type="PTM">
    <text evidence="1">Methylated by PrmC. Methylation increases the termination efficiency of RF1.</text>
</comment>
<comment type="similarity">
    <text evidence="1">Belongs to the prokaryotic/mitochondrial release factor family.</text>
</comment>
<feature type="chain" id="PRO_0000177661" description="Peptide chain release factor 1">
    <location>
        <begin position="1"/>
        <end position="360"/>
    </location>
</feature>
<feature type="modified residue" description="N5-methylglutamine" evidence="1">
    <location>
        <position position="234"/>
    </location>
</feature>
<proteinExistence type="inferred from homology"/>
<protein>
    <recommendedName>
        <fullName evidence="1">Peptide chain release factor 1</fullName>
        <shortName evidence="1">RF-1</shortName>
    </recommendedName>
</protein>
<keyword id="KW-0963">Cytoplasm</keyword>
<keyword id="KW-0488">Methylation</keyword>
<keyword id="KW-0648">Protein biosynthesis</keyword>
<keyword id="KW-1185">Reference proteome</keyword>
<reference key="1">
    <citation type="journal article" date="2002" name="Proc. Natl. Acad. Sci. U.S.A.">
        <title>Complete genome sequence of Clostridium perfringens, an anaerobic flesh-eater.</title>
        <authorList>
            <person name="Shimizu T."/>
            <person name="Ohtani K."/>
            <person name="Hirakawa H."/>
            <person name="Ohshima K."/>
            <person name="Yamashita A."/>
            <person name="Shiba T."/>
            <person name="Ogasawara N."/>
            <person name="Hattori M."/>
            <person name="Kuhara S."/>
            <person name="Hayashi H."/>
        </authorList>
    </citation>
    <scope>NUCLEOTIDE SEQUENCE [LARGE SCALE GENOMIC DNA]</scope>
    <source>
        <strain>13 / Type A</strain>
    </source>
</reference>
<name>RF1_CLOPE</name>
<gene>
    <name evidence="1" type="primary">prfA</name>
    <name type="ordered locus">CPE2202</name>
</gene>
<sequence length="360" mass="40946">MILDRLNFIENKYDELSVKISDPSIMANQKEWRKLCKEHADLEVIVNKYKEYKEATEELEANKEMLSEESDQEMREMINSEIKDLTERKKELEDEIQILLLPKDPNDDKNVFVEIRGGAGGDEAALFAANLFRMYTKYAEKNRWKVELMSANETDIGGFKEVVFMIKGAGAYSKLKYESGAHRVQRVPDTESSGRIHTSTATVAVLPEVDDVEIEINDKDIKIDVFRASGNGGQCVNTTDSAVRITHLPSGLVVSCQDEKSQLKNKEKAMKVLRARLFEQAEAERLAGIAEDRKSQVGTGDRSERIRTYNYPQGRVTDHRINMTLYKLDSFLEGDIDEILNALITEDQAQKMKAMGNTEF</sequence>
<dbReference type="EMBL" id="BA000016">
    <property type="protein sequence ID" value="BAB81908.1"/>
    <property type="molecule type" value="Genomic_DNA"/>
</dbReference>
<dbReference type="RefSeq" id="WP_003452315.1">
    <property type="nucleotide sequence ID" value="NC_003366.1"/>
</dbReference>
<dbReference type="SMR" id="Q8XIB9"/>
<dbReference type="STRING" id="195102.gene:10491481"/>
<dbReference type="GeneID" id="93001256"/>
<dbReference type="KEGG" id="cpe:CPE2202"/>
<dbReference type="HOGENOM" id="CLU_036856_0_1_9"/>
<dbReference type="Proteomes" id="UP000000818">
    <property type="component" value="Chromosome"/>
</dbReference>
<dbReference type="GO" id="GO:0005737">
    <property type="term" value="C:cytoplasm"/>
    <property type="evidence" value="ECO:0007669"/>
    <property type="project" value="UniProtKB-SubCell"/>
</dbReference>
<dbReference type="GO" id="GO:0016149">
    <property type="term" value="F:translation release factor activity, codon specific"/>
    <property type="evidence" value="ECO:0007669"/>
    <property type="project" value="UniProtKB-UniRule"/>
</dbReference>
<dbReference type="FunFam" id="3.30.160.20:FF:000004">
    <property type="entry name" value="Peptide chain release factor 1"/>
    <property type="match status" value="1"/>
</dbReference>
<dbReference type="FunFam" id="3.30.70.1660:FF:000002">
    <property type="entry name" value="Peptide chain release factor 1"/>
    <property type="match status" value="1"/>
</dbReference>
<dbReference type="FunFam" id="3.30.70.1660:FF:000004">
    <property type="entry name" value="Peptide chain release factor 1"/>
    <property type="match status" value="1"/>
</dbReference>
<dbReference type="Gene3D" id="3.30.160.20">
    <property type="match status" value="1"/>
</dbReference>
<dbReference type="Gene3D" id="3.30.70.1660">
    <property type="match status" value="1"/>
</dbReference>
<dbReference type="Gene3D" id="6.10.140.1950">
    <property type="match status" value="1"/>
</dbReference>
<dbReference type="HAMAP" id="MF_00093">
    <property type="entry name" value="Rel_fac_1"/>
    <property type="match status" value="1"/>
</dbReference>
<dbReference type="InterPro" id="IPR005139">
    <property type="entry name" value="PCRF"/>
</dbReference>
<dbReference type="InterPro" id="IPR000352">
    <property type="entry name" value="Pep_chain_release_fac_I"/>
</dbReference>
<dbReference type="InterPro" id="IPR045853">
    <property type="entry name" value="Pep_chain_release_fac_I_sf"/>
</dbReference>
<dbReference type="InterPro" id="IPR050057">
    <property type="entry name" value="Prokaryotic/Mito_RF"/>
</dbReference>
<dbReference type="InterPro" id="IPR004373">
    <property type="entry name" value="RF-1"/>
</dbReference>
<dbReference type="NCBIfam" id="TIGR00019">
    <property type="entry name" value="prfA"/>
    <property type="match status" value="1"/>
</dbReference>
<dbReference type="NCBIfam" id="NF001859">
    <property type="entry name" value="PRK00591.1"/>
    <property type="match status" value="1"/>
</dbReference>
<dbReference type="PANTHER" id="PTHR43804">
    <property type="entry name" value="LD18447P"/>
    <property type="match status" value="1"/>
</dbReference>
<dbReference type="PANTHER" id="PTHR43804:SF7">
    <property type="entry name" value="LD18447P"/>
    <property type="match status" value="1"/>
</dbReference>
<dbReference type="Pfam" id="PF03462">
    <property type="entry name" value="PCRF"/>
    <property type="match status" value="1"/>
</dbReference>
<dbReference type="Pfam" id="PF00472">
    <property type="entry name" value="RF-1"/>
    <property type="match status" value="1"/>
</dbReference>
<dbReference type="SMART" id="SM00937">
    <property type="entry name" value="PCRF"/>
    <property type="match status" value="1"/>
</dbReference>
<dbReference type="SUPFAM" id="SSF75620">
    <property type="entry name" value="Release factor"/>
    <property type="match status" value="1"/>
</dbReference>
<dbReference type="PROSITE" id="PS00745">
    <property type="entry name" value="RF_PROK_I"/>
    <property type="match status" value="1"/>
</dbReference>
<evidence type="ECO:0000255" key="1">
    <source>
        <dbReference type="HAMAP-Rule" id="MF_00093"/>
    </source>
</evidence>